<dbReference type="EC" id="6.1.1.2" evidence="1"/>
<dbReference type="EMBL" id="AE000512">
    <property type="protein sequence ID" value="AAD35577.1"/>
    <property type="molecule type" value="Genomic_DNA"/>
</dbReference>
<dbReference type="PIR" id="C72370">
    <property type="entry name" value="C72370"/>
</dbReference>
<dbReference type="RefSeq" id="NP_228302.1">
    <property type="nucleotide sequence ID" value="NC_000853.1"/>
</dbReference>
<dbReference type="RefSeq" id="WP_004081463.1">
    <property type="nucleotide sequence ID" value="NC_000853.1"/>
</dbReference>
<dbReference type="PDB" id="2G36">
    <property type="method" value="X-ray"/>
    <property type="resolution" value="2.50 A"/>
    <property type="chains" value="A=1-328"/>
</dbReference>
<dbReference type="PDBsum" id="2G36"/>
<dbReference type="SMR" id="Q9WYW2"/>
<dbReference type="FunCoup" id="Q9WYW2">
    <property type="interactions" value="338"/>
</dbReference>
<dbReference type="STRING" id="243274.TM_0492"/>
<dbReference type="PaxDb" id="243274-THEMA_02210"/>
<dbReference type="EnsemblBacteria" id="AAD35577">
    <property type="protein sequence ID" value="AAD35577"/>
    <property type="gene ID" value="TM_0492"/>
</dbReference>
<dbReference type="KEGG" id="tma:TM0492"/>
<dbReference type="KEGG" id="tmi:THEMA_02210"/>
<dbReference type="KEGG" id="tmm:Tmari_0489"/>
<dbReference type="KEGG" id="tmw:THMA_0505"/>
<dbReference type="eggNOG" id="COG0180">
    <property type="taxonomic scope" value="Bacteria"/>
</dbReference>
<dbReference type="InParanoid" id="Q9WYW2"/>
<dbReference type="OrthoDB" id="9801042at2"/>
<dbReference type="EvolutionaryTrace" id="Q9WYW2"/>
<dbReference type="Proteomes" id="UP000008183">
    <property type="component" value="Chromosome"/>
</dbReference>
<dbReference type="GO" id="GO:0005737">
    <property type="term" value="C:cytoplasm"/>
    <property type="evidence" value="ECO:0000318"/>
    <property type="project" value="GO_Central"/>
</dbReference>
<dbReference type="GO" id="GO:0005524">
    <property type="term" value="F:ATP binding"/>
    <property type="evidence" value="ECO:0007669"/>
    <property type="project" value="UniProtKB-UniRule"/>
</dbReference>
<dbReference type="GO" id="GO:0004830">
    <property type="term" value="F:tryptophan-tRNA ligase activity"/>
    <property type="evidence" value="ECO:0000318"/>
    <property type="project" value="GO_Central"/>
</dbReference>
<dbReference type="GO" id="GO:0006436">
    <property type="term" value="P:tryptophanyl-tRNA aminoacylation"/>
    <property type="evidence" value="ECO:0000318"/>
    <property type="project" value="GO_Central"/>
</dbReference>
<dbReference type="CDD" id="cd00806">
    <property type="entry name" value="TrpRS_core"/>
    <property type="match status" value="1"/>
</dbReference>
<dbReference type="FunFam" id="1.10.240.10:FF:000005">
    <property type="entry name" value="Tryptophan--tRNA ligase"/>
    <property type="match status" value="1"/>
</dbReference>
<dbReference type="FunFam" id="3.40.50.620:FF:000094">
    <property type="entry name" value="Tryptophan--tRNA ligase"/>
    <property type="match status" value="1"/>
</dbReference>
<dbReference type="Gene3D" id="3.40.50.620">
    <property type="entry name" value="HUPs"/>
    <property type="match status" value="1"/>
</dbReference>
<dbReference type="Gene3D" id="1.10.240.10">
    <property type="entry name" value="Tyrosyl-Transfer RNA Synthetase"/>
    <property type="match status" value="1"/>
</dbReference>
<dbReference type="HAMAP" id="MF_00140_B">
    <property type="entry name" value="Trp_tRNA_synth_B"/>
    <property type="match status" value="1"/>
</dbReference>
<dbReference type="InterPro" id="IPR001412">
    <property type="entry name" value="aa-tRNA-synth_I_CS"/>
</dbReference>
<dbReference type="InterPro" id="IPR002305">
    <property type="entry name" value="aa-tRNA-synth_Ic"/>
</dbReference>
<dbReference type="InterPro" id="IPR014729">
    <property type="entry name" value="Rossmann-like_a/b/a_fold"/>
</dbReference>
<dbReference type="InterPro" id="IPR002306">
    <property type="entry name" value="Trp-tRNA-ligase"/>
</dbReference>
<dbReference type="InterPro" id="IPR024109">
    <property type="entry name" value="Trp-tRNA-ligase_bac-type"/>
</dbReference>
<dbReference type="InterPro" id="IPR050203">
    <property type="entry name" value="Trp-tRNA_synthetase"/>
</dbReference>
<dbReference type="NCBIfam" id="TIGR00233">
    <property type="entry name" value="trpS"/>
    <property type="match status" value="1"/>
</dbReference>
<dbReference type="PANTHER" id="PTHR43766">
    <property type="entry name" value="TRYPTOPHAN--TRNA LIGASE, MITOCHONDRIAL"/>
    <property type="match status" value="1"/>
</dbReference>
<dbReference type="PANTHER" id="PTHR43766:SF1">
    <property type="entry name" value="TRYPTOPHAN--TRNA LIGASE, MITOCHONDRIAL"/>
    <property type="match status" value="1"/>
</dbReference>
<dbReference type="Pfam" id="PF00579">
    <property type="entry name" value="tRNA-synt_1b"/>
    <property type="match status" value="1"/>
</dbReference>
<dbReference type="PRINTS" id="PR01039">
    <property type="entry name" value="TRNASYNTHTRP"/>
</dbReference>
<dbReference type="SUPFAM" id="SSF52374">
    <property type="entry name" value="Nucleotidylyl transferase"/>
    <property type="match status" value="1"/>
</dbReference>
<dbReference type="PROSITE" id="PS00178">
    <property type="entry name" value="AA_TRNA_LIGASE_I"/>
    <property type="match status" value="1"/>
</dbReference>
<comment type="function">
    <text evidence="1">Catalyzes the attachment of tryptophan to tRNA(Trp).</text>
</comment>
<comment type="catalytic activity">
    <reaction evidence="1">
        <text>tRNA(Trp) + L-tryptophan + ATP = L-tryptophyl-tRNA(Trp) + AMP + diphosphate + H(+)</text>
        <dbReference type="Rhea" id="RHEA:24080"/>
        <dbReference type="Rhea" id="RHEA-COMP:9671"/>
        <dbReference type="Rhea" id="RHEA-COMP:9705"/>
        <dbReference type="ChEBI" id="CHEBI:15378"/>
        <dbReference type="ChEBI" id="CHEBI:30616"/>
        <dbReference type="ChEBI" id="CHEBI:33019"/>
        <dbReference type="ChEBI" id="CHEBI:57912"/>
        <dbReference type="ChEBI" id="CHEBI:78442"/>
        <dbReference type="ChEBI" id="CHEBI:78535"/>
        <dbReference type="ChEBI" id="CHEBI:456215"/>
        <dbReference type="EC" id="6.1.1.2"/>
    </reaction>
</comment>
<comment type="subunit">
    <text evidence="1">Homodimer.</text>
</comment>
<comment type="subcellular location">
    <subcellularLocation>
        <location evidence="1">Cytoplasm</location>
    </subcellularLocation>
</comment>
<comment type="similarity">
    <text evidence="1">Belongs to the class-I aminoacyl-tRNA synthetase family.</text>
</comment>
<evidence type="ECO:0000255" key="1">
    <source>
        <dbReference type="HAMAP-Rule" id="MF_00140"/>
    </source>
</evidence>
<evidence type="ECO:0007829" key="2">
    <source>
        <dbReference type="PDB" id="2G36"/>
    </source>
</evidence>
<name>SYW_THEMA</name>
<gene>
    <name evidence="1" type="primary">trpS</name>
    <name type="ordered locus">TM_0492</name>
</gene>
<organism>
    <name type="scientific">Thermotoga maritima (strain ATCC 43589 / DSM 3109 / JCM 10099 / NBRC 100826 / MSB8)</name>
    <dbReference type="NCBI Taxonomy" id="243274"/>
    <lineage>
        <taxon>Bacteria</taxon>
        <taxon>Thermotogati</taxon>
        <taxon>Thermotogota</taxon>
        <taxon>Thermotogae</taxon>
        <taxon>Thermotogales</taxon>
        <taxon>Thermotogaceae</taxon>
        <taxon>Thermotoga</taxon>
    </lineage>
</organism>
<reference key="1">
    <citation type="journal article" date="1999" name="Nature">
        <title>Evidence for lateral gene transfer between Archaea and Bacteria from genome sequence of Thermotoga maritima.</title>
        <authorList>
            <person name="Nelson K.E."/>
            <person name="Clayton R.A."/>
            <person name="Gill S.R."/>
            <person name="Gwinn M.L."/>
            <person name="Dodson R.J."/>
            <person name="Haft D.H."/>
            <person name="Hickey E.K."/>
            <person name="Peterson J.D."/>
            <person name="Nelson W.C."/>
            <person name="Ketchum K.A."/>
            <person name="McDonald L.A."/>
            <person name="Utterback T.R."/>
            <person name="Malek J.A."/>
            <person name="Linher K.D."/>
            <person name="Garrett M.M."/>
            <person name="Stewart A.M."/>
            <person name="Cotton M.D."/>
            <person name="Pratt M.S."/>
            <person name="Phillips C.A."/>
            <person name="Richardson D.L."/>
            <person name="Heidelberg J.F."/>
            <person name="Sutton G.G."/>
            <person name="Fleischmann R.D."/>
            <person name="Eisen J.A."/>
            <person name="White O."/>
            <person name="Salzberg S.L."/>
            <person name="Smith H.O."/>
            <person name="Venter J.C."/>
            <person name="Fraser C.M."/>
        </authorList>
    </citation>
    <scope>NUCLEOTIDE SEQUENCE [LARGE SCALE GENOMIC DNA]</scope>
    <source>
        <strain>ATCC 43589 / DSM 3109 / JCM 10099 / NBRC 100826 / MSB8</strain>
    </source>
</reference>
<accession>Q9WYW2</accession>
<sequence>MRILSGMRPTGKLHIGHLVGALENWVKLQEEGNECFYFVADWHALTTHYDDVSKLKEYTRDLVRGFLACGIDPEKSVIFVQSGVKEHAELALLFSMIVSVSRLERVPTYKEIKSELNYKDLSTAGFLIYPVLQAADILIYKAEGVPVGEDQVYHIELTREIARRFNYLYDEVFPEPEAILSRVPKLPGTDGRKMSKSYGNIINLEISEKELEQTILRMMTDPARVRRSDPGNPENCPVWKYHQAFDISEEESKWVWEGCTTASIGCVDCKKLLLKNMKRKLAPIWENFRKIDEDPHYVDDVIMEGTKKAREVAAKTMEEVRRAMNLMF</sequence>
<protein>
    <recommendedName>
        <fullName evidence="1">Tryptophan--tRNA ligase</fullName>
        <ecNumber evidence="1">6.1.1.2</ecNumber>
    </recommendedName>
    <alternativeName>
        <fullName evidence="1">Tryptophanyl-tRNA synthetase</fullName>
        <shortName evidence="1">TrpRS</shortName>
    </alternativeName>
</protein>
<proteinExistence type="evidence at protein level"/>
<keyword id="KW-0002">3D-structure</keyword>
<keyword id="KW-0030">Aminoacyl-tRNA synthetase</keyword>
<keyword id="KW-0067">ATP-binding</keyword>
<keyword id="KW-0963">Cytoplasm</keyword>
<keyword id="KW-0436">Ligase</keyword>
<keyword id="KW-0547">Nucleotide-binding</keyword>
<keyword id="KW-0648">Protein biosynthesis</keyword>
<keyword id="KW-1185">Reference proteome</keyword>
<feature type="chain" id="PRO_0000136699" description="Tryptophan--tRNA ligase">
    <location>
        <begin position="1"/>
        <end position="328"/>
    </location>
</feature>
<feature type="short sequence motif" description="'HIGH' region" evidence="1">
    <location>
        <begin position="9"/>
        <end position="17"/>
    </location>
</feature>
<feature type="short sequence motif" description="'KMSKS' region" evidence="1">
    <location>
        <begin position="193"/>
        <end position="197"/>
    </location>
</feature>
<feature type="binding site" evidence="1">
    <location>
        <begin position="8"/>
        <end position="10"/>
    </location>
    <ligand>
        <name>ATP</name>
        <dbReference type="ChEBI" id="CHEBI:30616"/>
    </ligand>
</feature>
<feature type="binding site" evidence="1">
    <location>
        <begin position="16"/>
        <end position="17"/>
    </location>
    <ligand>
        <name>ATP</name>
        <dbReference type="ChEBI" id="CHEBI:30616"/>
    </ligand>
</feature>
<feature type="binding site" evidence="1">
    <location>
        <position position="136"/>
    </location>
    <ligand>
        <name>L-tryptophan</name>
        <dbReference type="ChEBI" id="CHEBI:57912"/>
    </ligand>
</feature>
<feature type="binding site" evidence="1">
    <location>
        <begin position="148"/>
        <end position="150"/>
    </location>
    <ligand>
        <name>ATP</name>
        <dbReference type="ChEBI" id="CHEBI:30616"/>
    </ligand>
</feature>
<feature type="binding site" evidence="1">
    <location>
        <position position="186"/>
    </location>
    <ligand>
        <name>ATP</name>
        <dbReference type="ChEBI" id="CHEBI:30616"/>
    </ligand>
</feature>
<feature type="binding site" evidence="1">
    <location>
        <begin position="193"/>
        <end position="197"/>
    </location>
    <ligand>
        <name>ATP</name>
        <dbReference type="ChEBI" id="CHEBI:30616"/>
    </ligand>
</feature>
<feature type="strand" evidence="2">
    <location>
        <begin position="2"/>
        <end position="7"/>
    </location>
</feature>
<feature type="helix" evidence="2">
    <location>
        <begin position="15"/>
        <end position="19"/>
    </location>
</feature>
<feature type="helix" evidence="2">
    <location>
        <begin position="21"/>
        <end position="30"/>
    </location>
</feature>
<feature type="strand" evidence="2">
    <location>
        <begin position="34"/>
        <end position="39"/>
    </location>
</feature>
<feature type="helix" evidence="2">
    <location>
        <begin position="41"/>
        <end position="48"/>
    </location>
</feature>
<feature type="helix" evidence="2">
    <location>
        <begin position="55"/>
        <end position="68"/>
    </location>
</feature>
<feature type="turn" evidence="2">
    <location>
        <begin position="73"/>
        <end position="75"/>
    </location>
</feature>
<feature type="strand" evidence="2">
    <location>
        <begin position="76"/>
        <end position="80"/>
    </location>
</feature>
<feature type="helix" evidence="2">
    <location>
        <begin position="81"/>
        <end position="83"/>
    </location>
</feature>
<feature type="helix" evidence="2">
    <location>
        <begin position="86"/>
        <end position="95"/>
    </location>
</feature>
<feature type="helix" evidence="2">
    <location>
        <begin position="100"/>
        <end position="104"/>
    </location>
</feature>
<feature type="helix" evidence="2">
    <location>
        <begin position="107"/>
        <end position="110"/>
    </location>
</feature>
<feature type="helix" evidence="2">
    <location>
        <begin position="124"/>
        <end position="127"/>
    </location>
</feature>
<feature type="helix" evidence="2">
    <location>
        <begin position="129"/>
        <end position="138"/>
    </location>
</feature>
<feature type="turn" evidence="2">
    <location>
        <begin position="139"/>
        <end position="141"/>
    </location>
</feature>
<feature type="strand" evidence="2">
    <location>
        <begin position="143"/>
        <end position="147"/>
    </location>
</feature>
<feature type="helix" evidence="2">
    <location>
        <begin position="149"/>
        <end position="151"/>
    </location>
</feature>
<feature type="helix" evidence="2">
    <location>
        <begin position="152"/>
        <end position="168"/>
    </location>
</feature>
<feature type="strand" evidence="2">
    <location>
        <begin position="177"/>
        <end position="180"/>
    </location>
</feature>
<feature type="helix" evidence="2">
    <location>
        <begin position="196"/>
        <end position="198"/>
    </location>
</feature>
<feature type="helix" evidence="2">
    <location>
        <begin position="208"/>
        <end position="216"/>
    </location>
</feature>
<feature type="helix" evidence="2">
    <location>
        <begin position="233"/>
        <end position="235"/>
    </location>
</feature>
<feature type="helix" evidence="2">
    <location>
        <begin position="237"/>
        <end position="244"/>
    </location>
</feature>
<feature type="helix" evidence="2">
    <location>
        <begin position="249"/>
        <end position="260"/>
    </location>
</feature>
<feature type="helix" evidence="2">
    <location>
        <begin position="266"/>
        <end position="293"/>
    </location>
</feature>
<feature type="helix" evidence="2">
    <location>
        <begin position="297"/>
        <end position="323"/>
    </location>
</feature>